<dbReference type="EC" id="1.14.-.-"/>
<dbReference type="EMBL" id="AE013599">
    <property type="protein sequence ID" value="AAF59076.1"/>
    <property type="molecule type" value="Genomic_DNA"/>
</dbReference>
<dbReference type="EMBL" id="AY051723">
    <property type="protein sequence ID" value="AAK93147.1"/>
    <property type="molecule type" value="mRNA"/>
</dbReference>
<dbReference type="RefSeq" id="NP_610390.1">
    <property type="nucleotide sequence ID" value="NM_136546.3"/>
</dbReference>
<dbReference type="SMR" id="Q9V4U9"/>
<dbReference type="BioGRID" id="61688">
    <property type="interactions" value="19"/>
</dbReference>
<dbReference type="DIP" id="DIP-23076N"/>
<dbReference type="FunCoup" id="Q9V4U9">
    <property type="interactions" value="15"/>
</dbReference>
<dbReference type="IntAct" id="Q9V4U9">
    <property type="interactions" value="22"/>
</dbReference>
<dbReference type="STRING" id="7227.FBpp0087770"/>
<dbReference type="PaxDb" id="7227-FBpp0087770"/>
<dbReference type="DNASU" id="35837"/>
<dbReference type="EnsemblMetazoa" id="FBtr0088690">
    <property type="protein sequence ID" value="FBpp0087770"/>
    <property type="gene ID" value="FBgn0033304"/>
</dbReference>
<dbReference type="GeneID" id="35837"/>
<dbReference type="KEGG" id="dme:Dmel_CG2397"/>
<dbReference type="UCSC" id="CG2397-RA">
    <property type="organism name" value="d. melanogaster"/>
</dbReference>
<dbReference type="AGR" id="FB:FBgn0033304"/>
<dbReference type="CTD" id="35837"/>
<dbReference type="FlyBase" id="FBgn0033304">
    <property type="gene designation" value="Cyp6a13"/>
</dbReference>
<dbReference type="VEuPathDB" id="VectorBase:FBgn0033304"/>
<dbReference type="eggNOG" id="KOG0158">
    <property type="taxonomic scope" value="Eukaryota"/>
</dbReference>
<dbReference type="GeneTree" id="ENSGT00940000165972"/>
<dbReference type="HOGENOM" id="CLU_001570_5_2_1"/>
<dbReference type="InParanoid" id="Q9V4U9"/>
<dbReference type="OMA" id="FPNMVEV"/>
<dbReference type="OrthoDB" id="2789670at2759"/>
<dbReference type="PhylomeDB" id="Q9V4U9"/>
<dbReference type="BioGRID-ORCS" id="35837">
    <property type="hits" value="0 hits in 1 CRISPR screen"/>
</dbReference>
<dbReference type="GenomeRNAi" id="35837"/>
<dbReference type="PRO" id="PR:Q9V4U9"/>
<dbReference type="Proteomes" id="UP000000803">
    <property type="component" value="Chromosome 2R"/>
</dbReference>
<dbReference type="Bgee" id="FBgn0033304">
    <property type="expression patterns" value="Expressed in spermathecum and 70 other cell types or tissues"/>
</dbReference>
<dbReference type="GO" id="GO:0005789">
    <property type="term" value="C:endoplasmic reticulum membrane"/>
    <property type="evidence" value="ECO:0007669"/>
    <property type="project" value="UniProtKB-SubCell"/>
</dbReference>
<dbReference type="GO" id="GO:0020037">
    <property type="term" value="F:heme binding"/>
    <property type="evidence" value="ECO:0007669"/>
    <property type="project" value="InterPro"/>
</dbReference>
<dbReference type="GO" id="GO:0005506">
    <property type="term" value="F:iron ion binding"/>
    <property type="evidence" value="ECO:0007669"/>
    <property type="project" value="InterPro"/>
</dbReference>
<dbReference type="GO" id="GO:0004497">
    <property type="term" value="F:monooxygenase activity"/>
    <property type="evidence" value="ECO:0007669"/>
    <property type="project" value="UniProtKB-KW"/>
</dbReference>
<dbReference type="GO" id="GO:0016705">
    <property type="term" value="F:oxidoreductase activity, acting on paired donors, with incorporation or reduction of molecular oxygen"/>
    <property type="evidence" value="ECO:0007669"/>
    <property type="project" value="InterPro"/>
</dbReference>
<dbReference type="GO" id="GO:0042742">
    <property type="term" value="P:defense response to bacterium"/>
    <property type="evidence" value="ECO:0000315"/>
    <property type="project" value="FlyBase"/>
</dbReference>
<dbReference type="CDD" id="cd11056">
    <property type="entry name" value="CYP6-like"/>
    <property type="match status" value="1"/>
</dbReference>
<dbReference type="FunFam" id="1.10.630.10:FF:000042">
    <property type="entry name" value="Cytochrome P450"/>
    <property type="match status" value="1"/>
</dbReference>
<dbReference type="Gene3D" id="1.10.630.10">
    <property type="entry name" value="Cytochrome P450"/>
    <property type="match status" value="1"/>
</dbReference>
<dbReference type="InterPro" id="IPR001128">
    <property type="entry name" value="Cyt_P450"/>
</dbReference>
<dbReference type="InterPro" id="IPR017972">
    <property type="entry name" value="Cyt_P450_CS"/>
</dbReference>
<dbReference type="InterPro" id="IPR002401">
    <property type="entry name" value="Cyt_P450_E_grp-I"/>
</dbReference>
<dbReference type="InterPro" id="IPR036396">
    <property type="entry name" value="Cyt_P450_sf"/>
</dbReference>
<dbReference type="InterPro" id="IPR050476">
    <property type="entry name" value="Insect_CytP450_Detox"/>
</dbReference>
<dbReference type="PANTHER" id="PTHR24292">
    <property type="entry name" value="CYTOCHROME P450"/>
    <property type="match status" value="1"/>
</dbReference>
<dbReference type="PANTHER" id="PTHR24292:SF100">
    <property type="entry name" value="CYTOCHROME P450 6A16, ISOFORM B-RELATED"/>
    <property type="match status" value="1"/>
</dbReference>
<dbReference type="Pfam" id="PF00067">
    <property type="entry name" value="p450"/>
    <property type="match status" value="1"/>
</dbReference>
<dbReference type="PRINTS" id="PR00463">
    <property type="entry name" value="EP450I"/>
</dbReference>
<dbReference type="PRINTS" id="PR00385">
    <property type="entry name" value="P450"/>
</dbReference>
<dbReference type="SUPFAM" id="SSF48264">
    <property type="entry name" value="Cytochrome P450"/>
    <property type="match status" value="1"/>
</dbReference>
<dbReference type="PROSITE" id="PS00086">
    <property type="entry name" value="CYTOCHROME_P450"/>
    <property type="match status" value="1"/>
</dbReference>
<sequence>MLTLLVLVFTVGLLLYVKLRWHYSYWSRRGVAGERPVYFRGNMSGLGRDLHWTDINLRIYRKFRGVERYCGYFTFMTKSLFIMDLELIRDIMIRDFSSFADRGLFHNVRDDPLTGNLLFLDGPEWRWLRQNLTQVFTSGKMKFMFPNMVEVGEKLTQACRLQVGEIEAKDLCARFTTDVIGSCAFGLECNSLQDPESQFRRMGRSVTQEPLHSVLVQAFMFAQPELARKLRFRLFRPEVSEFFLDTVRQTLDYRRRENIHRNDLIQLLMELGEEGVKDALSFEQIAAQALVFFLAGFDTSSTTMSFCLYELALNPDVQERLRVEVLAVLKRNNQKLTYDSVQEMPYLDQVVAETLRKYPILPHLLRRSTKEYQIPNSNLILEPGSKIIIPVHSIHHDPELYPDPEKFDPSRFEPEEIKARHPFAYLPFGEGPRNCIGERFGKLQVKVGLVYLLRDFKFSRSEKTQIPLKFSSRNFLISTQEGVHLRMEGLERP</sequence>
<protein>
    <recommendedName>
        <fullName>Probable cytochrome P450 6a13</fullName>
        <ecNumber>1.14.-.-</ecNumber>
    </recommendedName>
    <alternativeName>
        <fullName>CYPVIA13</fullName>
    </alternativeName>
</protein>
<name>C6A13_DROME</name>
<organism>
    <name type="scientific">Drosophila melanogaster</name>
    <name type="common">Fruit fly</name>
    <dbReference type="NCBI Taxonomy" id="7227"/>
    <lineage>
        <taxon>Eukaryota</taxon>
        <taxon>Metazoa</taxon>
        <taxon>Ecdysozoa</taxon>
        <taxon>Arthropoda</taxon>
        <taxon>Hexapoda</taxon>
        <taxon>Insecta</taxon>
        <taxon>Pterygota</taxon>
        <taxon>Neoptera</taxon>
        <taxon>Endopterygota</taxon>
        <taxon>Diptera</taxon>
        <taxon>Brachycera</taxon>
        <taxon>Muscomorpha</taxon>
        <taxon>Ephydroidea</taxon>
        <taxon>Drosophilidae</taxon>
        <taxon>Drosophila</taxon>
        <taxon>Sophophora</taxon>
    </lineage>
</organism>
<keyword id="KW-0256">Endoplasmic reticulum</keyword>
<keyword id="KW-0349">Heme</keyword>
<keyword id="KW-0408">Iron</keyword>
<keyword id="KW-0472">Membrane</keyword>
<keyword id="KW-0479">Metal-binding</keyword>
<keyword id="KW-0492">Microsome</keyword>
<keyword id="KW-0503">Monooxygenase</keyword>
<keyword id="KW-0560">Oxidoreductase</keyword>
<keyword id="KW-1185">Reference proteome</keyword>
<accession>Q9V4U9</accession>
<comment type="function">
    <text evidence="1">May be involved in the metabolism of insect hormones and in the breakdown of synthetic insecticides.</text>
</comment>
<comment type="cofactor">
    <cofactor evidence="1">
        <name>heme</name>
        <dbReference type="ChEBI" id="CHEBI:30413"/>
    </cofactor>
</comment>
<comment type="subcellular location">
    <subcellularLocation>
        <location evidence="2">Endoplasmic reticulum membrane</location>
        <topology evidence="2">Peripheral membrane protein</topology>
    </subcellularLocation>
    <subcellularLocation>
        <location evidence="2">Microsome membrane</location>
        <topology evidence="2">Peripheral membrane protein</topology>
    </subcellularLocation>
</comment>
<comment type="similarity">
    <text evidence="2">Belongs to the cytochrome P450 family.</text>
</comment>
<evidence type="ECO:0000250" key="1"/>
<evidence type="ECO:0000305" key="2"/>
<reference key="1">
    <citation type="journal article" date="2000" name="Science">
        <title>The genome sequence of Drosophila melanogaster.</title>
        <authorList>
            <person name="Adams M.D."/>
            <person name="Celniker S.E."/>
            <person name="Holt R.A."/>
            <person name="Evans C.A."/>
            <person name="Gocayne J.D."/>
            <person name="Amanatides P.G."/>
            <person name="Scherer S.E."/>
            <person name="Li P.W."/>
            <person name="Hoskins R.A."/>
            <person name="Galle R.F."/>
            <person name="George R.A."/>
            <person name="Lewis S.E."/>
            <person name="Richards S."/>
            <person name="Ashburner M."/>
            <person name="Henderson S.N."/>
            <person name="Sutton G.G."/>
            <person name="Wortman J.R."/>
            <person name="Yandell M.D."/>
            <person name="Zhang Q."/>
            <person name="Chen L.X."/>
            <person name="Brandon R.C."/>
            <person name="Rogers Y.-H.C."/>
            <person name="Blazej R.G."/>
            <person name="Champe M."/>
            <person name="Pfeiffer B.D."/>
            <person name="Wan K.H."/>
            <person name="Doyle C."/>
            <person name="Baxter E.G."/>
            <person name="Helt G."/>
            <person name="Nelson C.R."/>
            <person name="Miklos G.L.G."/>
            <person name="Abril J.F."/>
            <person name="Agbayani A."/>
            <person name="An H.-J."/>
            <person name="Andrews-Pfannkoch C."/>
            <person name="Baldwin D."/>
            <person name="Ballew R.M."/>
            <person name="Basu A."/>
            <person name="Baxendale J."/>
            <person name="Bayraktaroglu L."/>
            <person name="Beasley E.M."/>
            <person name="Beeson K.Y."/>
            <person name="Benos P.V."/>
            <person name="Berman B.P."/>
            <person name="Bhandari D."/>
            <person name="Bolshakov S."/>
            <person name="Borkova D."/>
            <person name="Botchan M.R."/>
            <person name="Bouck J."/>
            <person name="Brokstein P."/>
            <person name="Brottier P."/>
            <person name="Burtis K.C."/>
            <person name="Busam D.A."/>
            <person name="Butler H."/>
            <person name="Cadieu E."/>
            <person name="Center A."/>
            <person name="Chandra I."/>
            <person name="Cherry J.M."/>
            <person name="Cawley S."/>
            <person name="Dahlke C."/>
            <person name="Davenport L.B."/>
            <person name="Davies P."/>
            <person name="de Pablos B."/>
            <person name="Delcher A."/>
            <person name="Deng Z."/>
            <person name="Mays A.D."/>
            <person name="Dew I."/>
            <person name="Dietz S.M."/>
            <person name="Dodson K."/>
            <person name="Doup L.E."/>
            <person name="Downes M."/>
            <person name="Dugan-Rocha S."/>
            <person name="Dunkov B.C."/>
            <person name="Dunn P."/>
            <person name="Durbin K.J."/>
            <person name="Evangelista C.C."/>
            <person name="Ferraz C."/>
            <person name="Ferriera S."/>
            <person name="Fleischmann W."/>
            <person name="Fosler C."/>
            <person name="Gabrielian A.E."/>
            <person name="Garg N.S."/>
            <person name="Gelbart W.M."/>
            <person name="Glasser K."/>
            <person name="Glodek A."/>
            <person name="Gong F."/>
            <person name="Gorrell J.H."/>
            <person name="Gu Z."/>
            <person name="Guan P."/>
            <person name="Harris M."/>
            <person name="Harris N.L."/>
            <person name="Harvey D.A."/>
            <person name="Heiman T.J."/>
            <person name="Hernandez J.R."/>
            <person name="Houck J."/>
            <person name="Hostin D."/>
            <person name="Houston K.A."/>
            <person name="Howland T.J."/>
            <person name="Wei M.-H."/>
            <person name="Ibegwam C."/>
            <person name="Jalali M."/>
            <person name="Kalush F."/>
            <person name="Karpen G.H."/>
            <person name="Ke Z."/>
            <person name="Kennison J.A."/>
            <person name="Ketchum K.A."/>
            <person name="Kimmel B.E."/>
            <person name="Kodira C.D."/>
            <person name="Kraft C.L."/>
            <person name="Kravitz S."/>
            <person name="Kulp D."/>
            <person name="Lai Z."/>
            <person name="Lasko P."/>
            <person name="Lei Y."/>
            <person name="Levitsky A.A."/>
            <person name="Li J.H."/>
            <person name="Li Z."/>
            <person name="Liang Y."/>
            <person name="Lin X."/>
            <person name="Liu X."/>
            <person name="Mattei B."/>
            <person name="McIntosh T.C."/>
            <person name="McLeod M.P."/>
            <person name="McPherson D."/>
            <person name="Merkulov G."/>
            <person name="Milshina N.V."/>
            <person name="Mobarry C."/>
            <person name="Morris J."/>
            <person name="Moshrefi A."/>
            <person name="Mount S.M."/>
            <person name="Moy M."/>
            <person name="Murphy B."/>
            <person name="Murphy L."/>
            <person name="Muzny D.M."/>
            <person name="Nelson D.L."/>
            <person name="Nelson D.R."/>
            <person name="Nelson K.A."/>
            <person name="Nixon K."/>
            <person name="Nusskern D.R."/>
            <person name="Pacleb J.M."/>
            <person name="Palazzolo M."/>
            <person name="Pittman G.S."/>
            <person name="Pan S."/>
            <person name="Pollard J."/>
            <person name="Puri V."/>
            <person name="Reese M.G."/>
            <person name="Reinert K."/>
            <person name="Remington K."/>
            <person name="Saunders R.D.C."/>
            <person name="Scheeler F."/>
            <person name="Shen H."/>
            <person name="Shue B.C."/>
            <person name="Siden-Kiamos I."/>
            <person name="Simpson M."/>
            <person name="Skupski M.P."/>
            <person name="Smith T.J."/>
            <person name="Spier E."/>
            <person name="Spradling A.C."/>
            <person name="Stapleton M."/>
            <person name="Strong R."/>
            <person name="Sun E."/>
            <person name="Svirskas R."/>
            <person name="Tector C."/>
            <person name="Turner R."/>
            <person name="Venter E."/>
            <person name="Wang A.H."/>
            <person name="Wang X."/>
            <person name="Wang Z.-Y."/>
            <person name="Wassarman D.A."/>
            <person name="Weinstock G.M."/>
            <person name="Weissenbach J."/>
            <person name="Williams S.M."/>
            <person name="Woodage T."/>
            <person name="Worley K.C."/>
            <person name="Wu D."/>
            <person name="Yang S."/>
            <person name="Yao Q.A."/>
            <person name="Ye J."/>
            <person name="Yeh R.-F."/>
            <person name="Zaveri J.S."/>
            <person name="Zhan M."/>
            <person name="Zhang G."/>
            <person name="Zhao Q."/>
            <person name="Zheng L."/>
            <person name="Zheng X.H."/>
            <person name="Zhong F.N."/>
            <person name="Zhong W."/>
            <person name="Zhou X."/>
            <person name="Zhu S.C."/>
            <person name="Zhu X."/>
            <person name="Smith H.O."/>
            <person name="Gibbs R.A."/>
            <person name="Myers E.W."/>
            <person name="Rubin G.M."/>
            <person name="Venter J.C."/>
        </authorList>
    </citation>
    <scope>NUCLEOTIDE SEQUENCE [LARGE SCALE GENOMIC DNA]</scope>
    <source>
        <strain>Berkeley</strain>
    </source>
</reference>
<reference key="2">
    <citation type="journal article" date="2002" name="Genome Biol.">
        <title>Annotation of the Drosophila melanogaster euchromatic genome: a systematic review.</title>
        <authorList>
            <person name="Misra S."/>
            <person name="Crosby M.A."/>
            <person name="Mungall C.J."/>
            <person name="Matthews B.B."/>
            <person name="Campbell K.S."/>
            <person name="Hradecky P."/>
            <person name="Huang Y."/>
            <person name="Kaminker J.S."/>
            <person name="Millburn G.H."/>
            <person name="Prochnik S.E."/>
            <person name="Smith C.D."/>
            <person name="Tupy J.L."/>
            <person name="Whitfield E.J."/>
            <person name="Bayraktaroglu L."/>
            <person name="Berman B.P."/>
            <person name="Bettencourt B.R."/>
            <person name="Celniker S.E."/>
            <person name="de Grey A.D.N.J."/>
            <person name="Drysdale R.A."/>
            <person name="Harris N.L."/>
            <person name="Richter J."/>
            <person name="Russo S."/>
            <person name="Schroeder A.J."/>
            <person name="Shu S.Q."/>
            <person name="Stapleton M."/>
            <person name="Yamada C."/>
            <person name="Ashburner M."/>
            <person name="Gelbart W.M."/>
            <person name="Rubin G.M."/>
            <person name="Lewis S.E."/>
        </authorList>
    </citation>
    <scope>GENOME REANNOTATION</scope>
    <source>
        <strain>Berkeley</strain>
    </source>
</reference>
<reference key="3">
    <citation type="journal article" date="2002" name="Genome Biol.">
        <title>A Drosophila full-length cDNA resource.</title>
        <authorList>
            <person name="Stapleton M."/>
            <person name="Carlson J.W."/>
            <person name="Brokstein P."/>
            <person name="Yu C."/>
            <person name="Champe M."/>
            <person name="George R.A."/>
            <person name="Guarin H."/>
            <person name="Kronmiller B."/>
            <person name="Pacleb J.M."/>
            <person name="Park S."/>
            <person name="Wan K.H."/>
            <person name="Rubin G.M."/>
            <person name="Celniker S.E."/>
        </authorList>
    </citation>
    <scope>NUCLEOTIDE SEQUENCE [LARGE SCALE MRNA]</scope>
    <source>
        <strain>Berkeley</strain>
        <tissue>Embryo</tissue>
    </source>
</reference>
<gene>
    <name type="primary">Cyp6a13</name>
    <name type="ORF">CG2397</name>
</gene>
<feature type="chain" id="PRO_0000051869" description="Probable cytochrome P450 6a13">
    <location>
        <begin position="1"/>
        <end position="493"/>
    </location>
</feature>
<feature type="binding site" description="axial binding residue" evidence="1">
    <location>
        <position position="435"/>
    </location>
    <ligand>
        <name>heme</name>
        <dbReference type="ChEBI" id="CHEBI:30413"/>
    </ligand>
    <ligandPart>
        <name>Fe</name>
        <dbReference type="ChEBI" id="CHEBI:18248"/>
    </ligandPart>
</feature>
<proteinExistence type="evidence at transcript level"/>